<geneLocation type="mitochondrion"/>
<sequence length="269" mass="30408">MNLSTKFQGHPYHIVSASPWPFFLSVVLFFNCLAATLYLHGYKHSSVFFGISFLGLLATMYLWFRDMSTEANIHGAHTKAVTKGLKIGFMLFLISETFLFASIFWAFFHSSLSPTFELGAVWPPVGIADKTIDPLEVPLLNTVILLTSGASLTYAHYSLIARNRENALKGLYMTIALSFLFLGGQAYEYWNAPFTISDSVYGASFYFATGLHGIHIIVGTILLLAATYNIYTYHLTNTHHNGFECGIYYWHFCDVVWLFLYLTIYIWGS</sequence>
<evidence type="ECO:0000250" key="1">
    <source>
        <dbReference type="UniProtKB" id="P00420"/>
    </source>
</evidence>
<evidence type="ECO:0000255" key="2"/>
<evidence type="ECO:0000305" key="3"/>
<evidence type="ECO:0007829" key="4">
    <source>
        <dbReference type="PDB" id="8C8Q"/>
    </source>
</evidence>
<keyword id="KW-0002">3D-structure</keyword>
<keyword id="KW-0472">Membrane</keyword>
<keyword id="KW-0496">Mitochondrion</keyword>
<keyword id="KW-0999">Mitochondrion inner membrane</keyword>
<keyword id="KW-1185">Reference proteome</keyword>
<keyword id="KW-1278">Translocase</keyword>
<keyword id="KW-0812">Transmembrane</keyword>
<keyword id="KW-1133">Transmembrane helix</keyword>
<gene>
    <name type="primary">cox3</name>
    <name type="ORF">SPMIT.04</name>
</gene>
<proteinExistence type="evidence at protein level"/>
<feature type="chain" id="PRO_0000183851" description="Cytochrome c oxidase subunit 3">
    <location>
        <begin position="1"/>
        <end position="269"/>
    </location>
</feature>
<feature type="transmembrane region" description="Helical" evidence="2">
    <location>
        <begin position="19"/>
        <end position="39"/>
    </location>
</feature>
<feature type="transmembrane region" description="Helical" evidence="2">
    <location>
        <begin position="44"/>
        <end position="64"/>
    </location>
</feature>
<feature type="transmembrane region" description="Helical" evidence="2">
    <location>
        <begin position="87"/>
        <end position="107"/>
    </location>
</feature>
<feature type="transmembrane region" description="Helical" evidence="2">
    <location>
        <begin position="135"/>
        <end position="155"/>
    </location>
</feature>
<feature type="transmembrane region" description="Helical" evidence="2">
    <location>
        <begin position="170"/>
        <end position="190"/>
    </location>
</feature>
<feature type="transmembrane region" description="Helical" evidence="2">
    <location>
        <begin position="205"/>
        <end position="225"/>
    </location>
</feature>
<feature type="transmembrane region" description="Helical" evidence="2">
    <location>
        <begin position="247"/>
        <end position="267"/>
    </location>
</feature>
<feature type="helix" evidence="4">
    <location>
        <begin position="4"/>
        <end position="6"/>
    </location>
</feature>
<feature type="helix" evidence="4">
    <location>
        <begin position="21"/>
        <end position="39"/>
    </location>
</feature>
<feature type="helix" evidence="4">
    <location>
        <begin position="47"/>
        <end position="72"/>
    </location>
</feature>
<feature type="helix" evidence="4">
    <location>
        <begin position="81"/>
        <end position="99"/>
    </location>
</feature>
<feature type="helix" evidence="4">
    <location>
        <begin position="101"/>
        <end position="112"/>
    </location>
</feature>
<feature type="helix" evidence="4">
    <location>
        <begin position="116"/>
        <end position="118"/>
    </location>
</feature>
<feature type="strand" evidence="4">
    <location>
        <begin position="121"/>
        <end position="123"/>
    </location>
</feature>
<feature type="helix" evidence="4">
    <location>
        <begin position="127"/>
        <end position="130"/>
    </location>
</feature>
<feature type="helix" evidence="4">
    <location>
        <begin position="137"/>
        <end position="160"/>
    </location>
</feature>
<feature type="helix" evidence="4">
    <location>
        <begin position="165"/>
        <end position="190"/>
    </location>
</feature>
<feature type="strand" evidence="4">
    <location>
        <begin position="196"/>
        <end position="198"/>
    </location>
</feature>
<feature type="helix" evidence="4">
    <location>
        <begin position="201"/>
        <end position="231"/>
    </location>
</feature>
<feature type="helix" evidence="4">
    <location>
        <begin position="241"/>
        <end position="263"/>
    </location>
</feature>
<feature type="turn" evidence="4">
    <location>
        <begin position="264"/>
        <end position="268"/>
    </location>
</feature>
<accession>P14575</accession>
<protein>
    <recommendedName>
        <fullName>Cytochrome c oxidase subunit 3</fullName>
        <ecNumber>7.1.1.9</ecNumber>
    </recommendedName>
    <alternativeName>
        <fullName>Cytochrome c oxidase polypeptide III</fullName>
    </alternativeName>
</protein>
<dbReference type="EC" id="7.1.1.9"/>
<dbReference type="EMBL" id="X16868">
    <property type="protein sequence ID" value="CAA34755.1"/>
    <property type="molecule type" value="Genomic_DNA"/>
</dbReference>
<dbReference type="EMBL" id="X54421">
    <property type="status" value="NOT_ANNOTATED_CDS"/>
    <property type="molecule type" value="Genomic_DNA"/>
</dbReference>
<dbReference type="PIR" id="S10080">
    <property type="entry name" value="S10080"/>
</dbReference>
<dbReference type="PDB" id="8C8Q">
    <property type="method" value="EM"/>
    <property type="resolution" value="3.36 A"/>
    <property type="chains" value="C=1-269"/>
</dbReference>
<dbReference type="PDB" id="8Q1B">
    <property type="method" value="EM"/>
    <property type="resolution" value="3.40 A"/>
    <property type="chains" value="c=1-269"/>
</dbReference>
<dbReference type="PDBsum" id="8C8Q"/>
<dbReference type="PDBsum" id="8Q1B"/>
<dbReference type="EMDB" id="EMD-16491"/>
<dbReference type="EMDB" id="EMD-18062"/>
<dbReference type="SMR" id="P14575"/>
<dbReference type="ComplexPortal" id="CPX-9641">
    <property type="entry name" value="Mitochondrial respiratory chain complex IV"/>
</dbReference>
<dbReference type="FunCoup" id="P14575">
    <property type="interactions" value="233"/>
</dbReference>
<dbReference type="STRING" id="284812.P14575"/>
<dbReference type="PaxDb" id="4896-SPMIT.04.1"/>
<dbReference type="PomBase" id="SPMIT.04">
    <property type="gene designation" value="cox3"/>
</dbReference>
<dbReference type="eggNOG" id="KOG4664">
    <property type="taxonomic scope" value="Eukaryota"/>
</dbReference>
<dbReference type="HOGENOM" id="CLU_044071_0_0_1"/>
<dbReference type="InParanoid" id="P14575"/>
<dbReference type="PhylomeDB" id="P14575"/>
<dbReference type="PRO" id="PR:P14575"/>
<dbReference type="Proteomes" id="UP000002485">
    <property type="component" value="Mitochondrion"/>
</dbReference>
<dbReference type="GO" id="GO:0005743">
    <property type="term" value="C:mitochondrial inner membrane"/>
    <property type="evidence" value="ECO:0000305"/>
    <property type="project" value="PomBase"/>
</dbReference>
<dbReference type="GO" id="GO:0005739">
    <property type="term" value="C:mitochondrion"/>
    <property type="evidence" value="ECO:0000318"/>
    <property type="project" value="GO_Central"/>
</dbReference>
<dbReference type="GO" id="GO:0045277">
    <property type="term" value="C:respiratory chain complex IV"/>
    <property type="evidence" value="ECO:0000314"/>
    <property type="project" value="PomBase"/>
</dbReference>
<dbReference type="GO" id="GO:0004129">
    <property type="term" value="F:cytochrome-c oxidase activity"/>
    <property type="evidence" value="ECO:0000315"/>
    <property type="project" value="PomBase"/>
</dbReference>
<dbReference type="GO" id="GO:0006123">
    <property type="term" value="P:mitochondrial electron transport, cytochrome c to oxygen"/>
    <property type="evidence" value="ECO:0000315"/>
    <property type="project" value="PomBase"/>
</dbReference>
<dbReference type="CDD" id="cd01665">
    <property type="entry name" value="Cyt_c_Oxidase_III"/>
    <property type="match status" value="1"/>
</dbReference>
<dbReference type="FunFam" id="1.10.287.70:FF:000082">
    <property type="entry name" value="Cytochrome c oxidase subunit 3"/>
    <property type="match status" value="1"/>
</dbReference>
<dbReference type="FunFam" id="1.20.120.80:FF:000002">
    <property type="entry name" value="Cytochrome c oxidase subunit 3"/>
    <property type="match status" value="1"/>
</dbReference>
<dbReference type="Gene3D" id="1.10.287.70">
    <property type="match status" value="1"/>
</dbReference>
<dbReference type="Gene3D" id="1.20.120.80">
    <property type="entry name" value="Cytochrome c oxidase, subunit III, four-helix bundle"/>
    <property type="match status" value="1"/>
</dbReference>
<dbReference type="InterPro" id="IPR024791">
    <property type="entry name" value="Cyt_c/ubiquinol_Oxase_su3"/>
</dbReference>
<dbReference type="InterPro" id="IPR033945">
    <property type="entry name" value="Cyt_c_oxase_su3_dom"/>
</dbReference>
<dbReference type="InterPro" id="IPR000298">
    <property type="entry name" value="Cyt_c_oxidase-like_su3"/>
</dbReference>
<dbReference type="InterPro" id="IPR035973">
    <property type="entry name" value="Cyt_c_oxidase_su3-like_sf"/>
</dbReference>
<dbReference type="InterPro" id="IPR013833">
    <property type="entry name" value="Cyt_c_oxidase_su3_a-hlx"/>
</dbReference>
<dbReference type="PANTHER" id="PTHR11403:SF7">
    <property type="entry name" value="CYTOCHROME C OXIDASE SUBUNIT 3"/>
    <property type="match status" value="1"/>
</dbReference>
<dbReference type="PANTHER" id="PTHR11403">
    <property type="entry name" value="CYTOCHROME C OXIDASE SUBUNIT III"/>
    <property type="match status" value="1"/>
</dbReference>
<dbReference type="Pfam" id="PF00510">
    <property type="entry name" value="COX3"/>
    <property type="match status" value="1"/>
</dbReference>
<dbReference type="SUPFAM" id="SSF81452">
    <property type="entry name" value="Cytochrome c oxidase subunit III-like"/>
    <property type="match status" value="1"/>
</dbReference>
<dbReference type="PROSITE" id="PS50253">
    <property type="entry name" value="COX3"/>
    <property type="match status" value="1"/>
</dbReference>
<organism>
    <name type="scientific">Schizosaccharomyces pombe (strain 972 / ATCC 24843)</name>
    <name type="common">Fission yeast</name>
    <dbReference type="NCBI Taxonomy" id="284812"/>
    <lineage>
        <taxon>Eukaryota</taxon>
        <taxon>Fungi</taxon>
        <taxon>Dikarya</taxon>
        <taxon>Ascomycota</taxon>
        <taxon>Taphrinomycotina</taxon>
        <taxon>Schizosaccharomycetes</taxon>
        <taxon>Schizosaccharomycetales</taxon>
        <taxon>Schizosaccharomycetaceae</taxon>
        <taxon>Schizosaccharomyces</taxon>
    </lineage>
</organism>
<comment type="function">
    <text evidence="1">Component of the cytochrome c oxidase, the last enzyme in the mitochondrial electron transport chain which drives oxidative phosphorylation. The respiratory chain contains 3 multisubunit complexes succinate dehydrogenase (complex II, CII), ubiquinol-cytochrome c oxidoreductase (cytochrome b-c1 complex, complex III, CIII) and cytochrome c oxidase (complex IV, CIV), that cooperate to transfer electrons derived from NADH and succinate to molecular oxygen, creating an electrochemical gradient over the inner membrane that drives transmembrane transport and the ATP synthase. Cytochrome c oxidase is the component of the respiratory chain that catalyzes the reduction of oxygen to water. Electrons originating from reduced cytochrome c in the intermembrane space (IMS) are transferred via the dinuclear copper A center (CU(A)) of subunit 2 and heme A of subunit 1 to the active site in subunit 1, a binuclear center (BNC) formed by heme A3 and copper B (CU(B)). The BNC reduces molecular oxygen to 2 water molecules using 4 electrons from cytochrome c in the IMS and 4 protons from the mitochondrial matrix.</text>
</comment>
<comment type="catalytic activity">
    <reaction evidence="1">
        <text>4 Fe(II)-[cytochrome c] + O2 + 8 H(+)(in) = 4 Fe(III)-[cytochrome c] + 2 H2O + 4 H(+)(out)</text>
        <dbReference type="Rhea" id="RHEA:11436"/>
        <dbReference type="Rhea" id="RHEA-COMP:10350"/>
        <dbReference type="Rhea" id="RHEA-COMP:14399"/>
        <dbReference type="ChEBI" id="CHEBI:15377"/>
        <dbReference type="ChEBI" id="CHEBI:15378"/>
        <dbReference type="ChEBI" id="CHEBI:15379"/>
        <dbReference type="ChEBI" id="CHEBI:29033"/>
        <dbReference type="ChEBI" id="CHEBI:29034"/>
        <dbReference type="EC" id="7.1.1.9"/>
    </reaction>
    <physiologicalReaction direction="left-to-right" evidence="1">
        <dbReference type="Rhea" id="RHEA:11437"/>
    </physiologicalReaction>
</comment>
<comment type="subunit">
    <text evidence="1">Component of the cytochrome c oxidase (complex IV, CIV), a multisubunit enzyme composed of a catalytic core of 3 subunits and several supernumerary subunits. The complex exists as a monomer or a dimer and forms supercomplexes (SCs) in the inner mitochondrial membrane with ubiquinol-cytochrome c oxidoreductase (cytochrome b-c1 complex, complex III, CIII).</text>
</comment>
<comment type="subcellular location">
    <subcellularLocation>
        <location evidence="1">Mitochondrion inner membrane</location>
        <topology evidence="1">Multi-pass membrane protein</topology>
    </subcellularLocation>
</comment>
<comment type="similarity">
    <text evidence="3">Belongs to the cytochrome c oxidase subunit 3 family.</text>
</comment>
<name>COX3_SCHPO</name>
<reference key="1">
    <citation type="journal article" date="1989" name="Nucleic Acids Res.">
        <title>Nucleotide sequence of the gene encoding subunit 3 of cytochrome c oxidase (cox3) in the mitochondrial genome of Schizosaccharomyces pombe strain EF1.</title>
        <authorList>
            <person name="Trinkl H."/>
            <person name="Wolf K."/>
        </authorList>
    </citation>
    <scope>NUCLEOTIDE SEQUENCE [GENOMIC DNA]</scope>
    <source>
        <strain>EF1</strain>
    </source>
</reference>
<reference key="2">
    <citation type="book" date="1993" name="Genetic Maps (6th edition)">
        <title>The mitochondrial genome of Schizosaccharomyces pombe.</title>
        <editorList>
            <person name="O'Brien S.J."/>
        </editorList>
        <authorList>
            <person name="Lang B.F."/>
        </authorList>
    </citation>
    <scope>NUCLEOTIDE SEQUENCE [LARGE SCALE GENOMIC DNA]</scope>
    <source>
        <strain>AD7-50</strain>
    </source>
</reference>